<gene>
    <name evidence="1" type="primary">ribBA</name>
    <name type="ordered locus">NT01CX_0713</name>
</gene>
<dbReference type="EC" id="4.1.99.12" evidence="1"/>
<dbReference type="EC" id="3.5.4.25" evidence="1"/>
<dbReference type="EMBL" id="CP000382">
    <property type="protein sequence ID" value="ABK61746.1"/>
    <property type="molecule type" value="Genomic_DNA"/>
</dbReference>
<dbReference type="RefSeq" id="WP_011723157.1">
    <property type="nucleotide sequence ID" value="NC_008593.1"/>
</dbReference>
<dbReference type="SMR" id="A0Q3H7"/>
<dbReference type="STRING" id="386415.NT01CX_0713"/>
<dbReference type="KEGG" id="cno:NT01CX_0713"/>
<dbReference type="PATRIC" id="fig|386415.7.peg.2218"/>
<dbReference type="eggNOG" id="COG0108">
    <property type="taxonomic scope" value="Bacteria"/>
</dbReference>
<dbReference type="eggNOG" id="COG0807">
    <property type="taxonomic scope" value="Bacteria"/>
</dbReference>
<dbReference type="HOGENOM" id="CLU_020273_1_2_9"/>
<dbReference type="UniPathway" id="UPA00275">
    <property type="reaction ID" value="UER00399"/>
</dbReference>
<dbReference type="UniPathway" id="UPA00275">
    <property type="reaction ID" value="UER00400"/>
</dbReference>
<dbReference type="Proteomes" id="UP000008220">
    <property type="component" value="Chromosome"/>
</dbReference>
<dbReference type="GO" id="GO:0005829">
    <property type="term" value="C:cytosol"/>
    <property type="evidence" value="ECO:0007669"/>
    <property type="project" value="TreeGrafter"/>
</dbReference>
<dbReference type="GO" id="GO:0008686">
    <property type="term" value="F:3,4-dihydroxy-2-butanone-4-phosphate synthase activity"/>
    <property type="evidence" value="ECO:0007669"/>
    <property type="project" value="UniProtKB-UniRule"/>
</dbReference>
<dbReference type="GO" id="GO:0005525">
    <property type="term" value="F:GTP binding"/>
    <property type="evidence" value="ECO:0007669"/>
    <property type="project" value="UniProtKB-KW"/>
</dbReference>
<dbReference type="GO" id="GO:0003935">
    <property type="term" value="F:GTP cyclohydrolase II activity"/>
    <property type="evidence" value="ECO:0007669"/>
    <property type="project" value="UniProtKB-UniRule"/>
</dbReference>
<dbReference type="GO" id="GO:0000287">
    <property type="term" value="F:magnesium ion binding"/>
    <property type="evidence" value="ECO:0007669"/>
    <property type="project" value="UniProtKB-UniRule"/>
</dbReference>
<dbReference type="GO" id="GO:0030145">
    <property type="term" value="F:manganese ion binding"/>
    <property type="evidence" value="ECO:0007669"/>
    <property type="project" value="UniProtKB-UniRule"/>
</dbReference>
<dbReference type="GO" id="GO:0008270">
    <property type="term" value="F:zinc ion binding"/>
    <property type="evidence" value="ECO:0007669"/>
    <property type="project" value="UniProtKB-UniRule"/>
</dbReference>
<dbReference type="GO" id="GO:0009231">
    <property type="term" value="P:riboflavin biosynthetic process"/>
    <property type="evidence" value="ECO:0007669"/>
    <property type="project" value="UniProtKB-UniRule"/>
</dbReference>
<dbReference type="CDD" id="cd00641">
    <property type="entry name" value="GTP_cyclohydro2"/>
    <property type="match status" value="1"/>
</dbReference>
<dbReference type="FunFam" id="3.40.50.10990:FF:000001">
    <property type="entry name" value="Riboflavin biosynthesis protein RibBA"/>
    <property type="match status" value="1"/>
</dbReference>
<dbReference type="FunFam" id="3.90.870.10:FF:000001">
    <property type="entry name" value="Riboflavin biosynthesis protein RibBA"/>
    <property type="match status" value="1"/>
</dbReference>
<dbReference type="Gene3D" id="3.90.870.10">
    <property type="entry name" value="DHBP synthase"/>
    <property type="match status" value="1"/>
</dbReference>
<dbReference type="Gene3D" id="3.40.50.10990">
    <property type="entry name" value="GTP cyclohydrolase II"/>
    <property type="match status" value="1"/>
</dbReference>
<dbReference type="HAMAP" id="MF_00179">
    <property type="entry name" value="RibA"/>
    <property type="match status" value="1"/>
</dbReference>
<dbReference type="HAMAP" id="MF_00180">
    <property type="entry name" value="RibB"/>
    <property type="match status" value="1"/>
</dbReference>
<dbReference type="HAMAP" id="MF_01283">
    <property type="entry name" value="RibBA"/>
    <property type="match status" value="1"/>
</dbReference>
<dbReference type="InterPro" id="IPR017945">
    <property type="entry name" value="DHBP_synth_RibB-like_a/b_dom"/>
</dbReference>
<dbReference type="InterPro" id="IPR000422">
    <property type="entry name" value="DHBP_synthase_RibB"/>
</dbReference>
<dbReference type="InterPro" id="IPR032677">
    <property type="entry name" value="GTP_cyclohydro_II"/>
</dbReference>
<dbReference type="InterPro" id="IPR000926">
    <property type="entry name" value="RibA"/>
</dbReference>
<dbReference type="InterPro" id="IPR036144">
    <property type="entry name" value="RibA-like_sf"/>
</dbReference>
<dbReference type="InterPro" id="IPR016299">
    <property type="entry name" value="Riboflavin_synth_RibBA"/>
</dbReference>
<dbReference type="NCBIfam" id="NF001591">
    <property type="entry name" value="PRK00393.1"/>
    <property type="match status" value="1"/>
</dbReference>
<dbReference type="NCBIfam" id="NF006803">
    <property type="entry name" value="PRK09311.1"/>
    <property type="match status" value="1"/>
</dbReference>
<dbReference type="NCBIfam" id="TIGR00505">
    <property type="entry name" value="ribA"/>
    <property type="match status" value="1"/>
</dbReference>
<dbReference type="NCBIfam" id="TIGR00506">
    <property type="entry name" value="ribB"/>
    <property type="match status" value="1"/>
</dbReference>
<dbReference type="PANTHER" id="PTHR21327:SF18">
    <property type="entry name" value="3,4-DIHYDROXY-2-BUTANONE 4-PHOSPHATE SYNTHASE"/>
    <property type="match status" value="1"/>
</dbReference>
<dbReference type="PANTHER" id="PTHR21327">
    <property type="entry name" value="GTP CYCLOHYDROLASE II-RELATED"/>
    <property type="match status" value="1"/>
</dbReference>
<dbReference type="Pfam" id="PF00926">
    <property type="entry name" value="DHBP_synthase"/>
    <property type="match status" value="1"/>
</dbReference>
<dbReference type="Pfam" id="PF00925">
    <property type="entry name" value="GTP_cyclohydro2"/>
    <property type="match status" value="1"/>
</dbReference>
<dbReference type="PIRSF" id="PIRSF001259">
    <property type="entry name" value="RibA"/>
    <property type="match status" value="1"/>
</dbReference>
<dbReference type="SUPFAM" id="SSF142695">
    <property type="entry name" value="RibA-like"/>
    <property type="match status" value="1"/>
</dbReference>
<dbReference type="SUPFAM" id="SSF55821">
    <property type="entry name" value="YrdC/RibB"/>
    <property type="match status" value="1"/>
</dbReference>
<comment type="function">
    <text evidence="1">Catalyzes the conversion of D-ribulose 5-phosphate to formate and 3,4-dihydroxy-2-butanone 4-phosphate.</text>
</comment>
<comment type="function">
    <text evidence="1">Catalyzes the conversion of GTP to 2,5-diamino-6-ribosylamino-4(3H)-pyrimidinone 5'-phosphate (DARP), formate and pyrophosphate.</text>
</comment>
<comment type="catalytic activity">
    <reaction evidence="1">
        <text>D-ribulose 5-phosphate = (2S)-2-hydroxy-3-oxobutyl phosphate + formate + H(+)</text>
        <dbReference type="Rhea" id="RHEA:18457"/>
        <dbReference type="ChEBI" id="CHEBI:15378"/>
        <dbReference type="ChEBI" id="CHEBI:15740"/>
        <dbReference type="ChEBI" id="CHEBI:58121"/>
        <dbReference type="ChEBI" id="CHEBI:58830"/>
        <dbReference type="EC" id="4.1.99.12"/>
    </reaction>
</comment>
<comment type="catalytic activity">
    <reaction evidence="1">
        <text>GTP + 4 H2O = 2,5-diamino-6-hydroxy-4-(5-phosphoribosylamino)-pyrimidine + formate + 2 phosphate + 3 H(+)</text>
        <dbReference type="Rhea" id="RHEA:23704"/>
        <dbReference type="ChEBI" id="CHEBI:15377"/>
        <dbReference type="ChEBI" id="CHEBI:15378"/>
        <dbReference type="ChEBI" id="CHEBI:15740"/>
        <dbReference type="ChEBI" id="CHEBI:37565"/>
        <dbReference type="ChEBI" id="CHEBI:43474"/>
        <dbReference type="ChEBI" id="CHEBI:58614"/>
        <dbReference type="EC" id="3.5.4.25"/>
    </reaction>
</comment>
<comment type="cofactor">
    <cofactor evidence="1">
        <name>Mg(2+)</name>
        <dbReference type="ChEBI" id="CHEBI:18420"/>
    </cofactor>
    <cofactor evidence="1">
        <name>Mn(2+)</name>
        <dbReference type="ChEBI" id="CHEBI:29035"/>
    </cofactor>
    <text evidence="1">Binds 2 divalent metal cations per subunit. Magnesium or manganese.</text>
</comment>
<comment type="cofactor">
    <cofactor evidence="1">
        <name>Zn(2+)</name>
        <dbReference type="ChEBI" id="CHEBI:29105"/>
    </cofactor>
    <text evidence="1">Binds 1 zinc ion per subunit.</text>
</comment>
<comment type="pathway">
    <text evidence="1">Cofactor biosynthesis; riboflavin biosynthesis; 2-hydroxy-3-oxobutyl phosphate from D-ribulose 5-phosphate: step 1/1.</text>
</comment>
<comment type="pathway">
    <text evidence="1">Cofactor biosynthesis; riboflavin biosynthesis; 5-amino-6-(D-ribitylamino)uracil from GTP: step 1/4.</text>
</comment>
<comment type="similarity">
    <text evidence="1">In the N-terminal section; belongs to the DHBP synthase family.</text>
</comment>
<comment type="similarity">
    <text evidence="1">In the C-terminal section; belongs to the GTP cyclohydrolase II family.</text>
</comment>
<sequence length="414" mass="46198">MEQFKFNTIEEAIEDIKNGKMVVVVDDEDRENEGDLLMAAEKVTPEAINFMAKYARGLICMPMTEEKLKELDLYQMVINNTDTKETAFTVSIDSVETTTGISAFERALTITKAVEKGAKAKDFQRPGHIFPLRARKGGVLKRAGHTEAAVDLATLAGLTPAGTICEIMNEDGTMARVPDLMKYVKVHNLKIVTIADLIEYRRKTESFIERQGSASLPTKYGEFEIIGYEDKLTGKEHVALVKGDIKNGEPVLIRVHSECLTGDVLGSLRCDCGDQLAQALRQINKEGRGALLYMRQEGRGIGLINKIKAYKLQDNGMDTVDANLALGFPEDLRDYGIGAQILKDLGVEKVRLMTNNPKKVSGISGYGIEIVERVPIEIECNKKNEFYLRTKKERMGHILNFKNIKKYDKSIKEA</sequence>
<evidence type="ECO:0000255" key="1">
    <source>
        <dbReference type="HAMAP-Rule" id="MF_01283"/>
    </source>
</evidence>
<organism>
    <name type="scientific">Clostridium novyi (strain NT)</name>
    <dbReference type="NCBI Taxonomy" id="386415"/>
    <lineage>
        <taxon>Bacteria</taxon>
        <taxon>Bacillati</taxon>
        <taxon>Bacillota</taxon>
        <taxon>Clostridia</taxon>
        <taxon>Eubacteriales</taxon>
        <taxon>Clostridiaceae</taxon>
        <taxon>Clostridium</taxon>
    </lineage>
</organism>
<protein>
    <recommendedName>
        <fullName evidence="1">Riboflavin biosynthesis protein RibBA</fullName>
    </recommendedName>
    <domain>
        <recommendedName>
            <fullName evidence="1">3,4-dihydroxy-2-butanone 4-phosphate synthase</fullName>
            <shortName evidence="1">DHBP synthase</shortName>
            <ecNumber evidence="1">4.1.99.12</ecNumber>
        </recommendedName>
    </domain>
    <domain>
        <recommendedName>
            <fullName evidence="1">GTP cyclohydrolase-2</fullName>
            <ecNumber evidence="1">3.5.4.25</ecNumber>
        </recommendedName>
        <alternativeName>
            <fullName evidence="1">GTP cyclohydrolase II</fullName>
        </alternativeName>
    </domain>
</protein>
<reference key="1">
    <citation type="journal article" date="2006" name="Nat. Biotechnol.">
        <title>The genome and transcriptomes of the anti-tumor agent Clostridium novyi-NT.</title>
        <authorList>
            <person name="Bettegowda C."/>
            <person name="Huang X."/>
            <person name="Lin J."/>
            <person name="Cheong I."/>
            <person name="Kohli M."/>
            <person name="Szabo S.A."/>
            <person name="Zhang X."/>
            <person name="Diaz L.A. Jr."/>
            <person name="Velculescu V.E."/>
            <person name="Parmigiani G."/>
            <person name="Kinzler K.W."/>
            <person name="Vogelstein B."/>
            <person name="Zhou S."/>
        </authorList>
    </citation>
    <scope>NUCLEOTIDE SEQUENCE [LARGE SCALE GENOMIC DNA]</scope>
    <source>
        <strain>NT</strain>
    </source>
</reference>
<proteinExistence type="inferred from homology"/>
<accession>A0Q3H7</accession>
<feature type="chain" id="PRO_1000073187" description="Riboflavin biosynthesis protein RibBA">
    <location>
        <begin position="1"/>
        <end position="414"/>
    </location>
</feature>
<feature type="region of interest" description="DHBP synthase">
    <location>
        <begin position="1"/>
        <end position="203"/>
    </location>
</feature>
<feature type="region of interest" description="GTP cyclohydrolase II">
    <location>
        <begin position="204"/>
        <end position="414"/>
    </location>
</feature>
<feature type="active site" description="Proton acceptor; for GTP cyclohydrolase activity" evidence="1">
    <location>
        <position position="331"/>
    </location>
</feature>
<feature type="active site" description="Nucleophile; for GTP cyclohydrolase activity" evidence="1">
    <location>
        <position position="333"/>
    </location>
</feature>
<feature type="binding site" evidence="1">
    <location>
        <begin position="30"/>
        <end position="31"/>
    </location>
    <ligand>
        <name>D-ribulose 5-phosphate</name>
        <dbReference type="ChEBI" id="CHEBI:58121"/>
    </ligand>
</feature>
<feature type="binding site" evidence="1">
    <location>
        <position position="31"/>
    </location>
    <ligand>
        <name>Mg(2+)</name>
        <dbReference type="ChEBI" id="CHEBI:18420"/>
        <label>1</label>
    </ligand>
</feature>
<feature type="binding site" evidence="1">
    <location>
        <position position="31"/>
    </location>
    <ligand>
        <name>Mg(2+)</name>
        <dbReference type="ChEBI" id="CHEBI:18420"/>
        <label>2</label>
    </ligand>
</feature>
<feature type="binding site" evidence="1">
    <location>
        <position position="35"/>
    </location>
    <ligand>
        <name>D-ribulose 5-phosphate</name>
        <dbReference type="ChEBI" id="CHEBI:58121"/>
    </ligand>
</feature>
<feature type="binding site" evidence="1">
    <location>
        <begin position="142"/>
        <end position="146"/>
    </location>
    <ligand>
        <name>D-ribulose 5-phosphate</name>
        <dbReference type="ChEBI" id="CHEBI:58121"/>
    </ligand>
</feature>
<feature type="binding site" evidence="1">
    <location>
        <position position="145"/>
    </location>
    <ligand>
        <name>Mg(2+)</name>
        <dbReference type="ChEBI" id="CHEBI:18420"/>
        <label>2</label>
    </ligand>
</feature>
<feature type="binding site" evidence="1">
    <location>
        <position position="166"/>
    </location>
    <ligand>
        <name>D-ribulose 5-phosphate</name>
        <dbReference type="ChEBI" id="CHEBI:58121"/>
    </ligand>
</feature>
<feature type="binding site" evidence="1">
    <location>
        <begin position="254"/>
        <end position="258"/>
    </location>
    <ligand>
        <name>GTP</name>
        <dbReference type="ChEBI" id="CHEBI:37565"/>
    </ligand>
</feature>
<feature type="binding site" evidence="1">
    <location>
        <position position="259"/>
    </location>
    <ligand>
        <name>Zn(2+)</name>
        <dbReference type="ChEBI" id="CHEBI:29105"/>
        <note>catalytic</note>
    </ligand>
</feature>
<feature type="binding site" evidence="1">
    <location>
        <position position="270"/>
    </location>
    <ligand>
        <name>Zn(2+)</name>
        <dbReference type="ChEBI" id="CHEBI:29105"/>
        <note>catalytic</note>
    </ligand>
</feature>
<feature type="binding site" evidence="1">
    <location>
        <position position="272"/>
    </location>
    <ligand>
        <name>Zn(2+)</name>
        <dbReference type="ChEBI" id="CHEBI:29105"/>
        <note>catalytic</note>
    </ligand>
</feature>
<feature type="binding site" evidence="1">
    <location>
        <position position="275"/>
    </location>
    <ligand>
        <name>GTP</name>
        <dbReference type="ChEBI" id="CHEBI:37565"/>
    </ligand>
</feature>
<feature type="binding site" evidence="1">
    <location>
        <begin position="297"/>
        <end position="299"/>
    </location>
    <ligand>
        <name>GTP</name>
        <dbReference type="ChEBI" id="CHEBI:37565"/>
    </ligand>
</feature>
<feature type="binding site" evidence="1">
    <location>
        <position position="319"/>
    </location>
    <ligand>
        <name>GTP</name>
        <dbReference type="ChEBI" id="CHEBI:37565"/>
    </ligand>
</feature>
<feature type="binding site" evidence="1">
    <location>
        <position position="354"/>
    </location>
    <ligand>
        <name>GTP</name>
        <dbReference type="ChEBI" id="CHEBI:37565"/>
    </ligand>
</feature>
<feature type="binding site" evidence="1">
    <location>
        <position position="359"/>
    </location>
    <ligand>
        <name>GTP</name>
        <dbReference type="ChEBI" id="CHEBI:37565"/>
    </ligand>
</feature>
<feature type="site" description="Essential for DHBP synthase activity" evidence="1">
    <location>
        <position position="128"/>
    </location>
</feature>
<feature type="site" description="Essential for DHBP synthase activity" evidence="1">
    <location>
        <position position="166"/>
    </location>
</feature>
<keyword id="KW-0342">GTP-binding</keyword>
<keyword id="KW-0378">Hydrolase</keyword>
<keyword id="KW-0456">Lyase</keyword>
<keyword id="KW-0460">Magnesium</keyword>
<keyword id="KW-0464">Manganese</keyword>
<keyword id="KW-0479">Metal-binding</keyword>
<keyword id="KW-0511">Multifunctional enzyme</keyword>
<keyword id="KW-0547">Nucleotide-binding</keyword>
<keyword id="KW-1185">Reference proteome</keyword>
<keyword id="KW-0686">Riboflavin biosynthesis</keyword>
<keyword id="KW-0862">Zinc</keyword>
<name>RIBBA_CLONN</name>